<protein>
    <recommendedName>
        <fullName>Serine/threonine-protein kinase pdik1l-A</fullName>
        <ecNumber>2.7.11.1</ecNumber>
    </recommendedName>
</protein>
<sequence length="339" mass="38523">MVSSQPKYDLIREVGRGSYGVVYEALVRRTSQRVAVKKIRCQAPENVELALREFWALSSIQSQHPNVIHMEECVLQKDGMVQRMLHGSSSVLYLPLVETSLKGEIAFDPRSIYCLWFVMDFCDGGDMNEYILTRRPSRRTNTSFMLQLSSALAFLHKNQIIHRDLKPDNILVCKSRDGVDEPTLKVADFGLSKVCSSSGLNPEEPANVNKSFLSTACGTDFYMAPEVWEGHYTAKADIFALGVILWAMLERITITDTHTKKRLLGGYVQRGAQVVPVGEALLENPKLELLIPVKKKSMNRRMKQLLHQMLSANPQERPDAFQLELKLIQIAFRDYTWET</sequence>
<name>PDK1A_XENLA</name>
<evidence type="ECO:0000250" key="1"/>
<evidence type="ECO:0000255" key="2">
    <source>
        <dbReference type="PROSITE-ProRule" id="PRU00159"/>
    </source>
</evidence>
<evidence type="ECO:0000255" key="3">
    <source>
        <dbReference type="PROSITE-ProRule" id="PRU10027"/>
    </source>
</evidence>
<gene>
    <name type="primary">pdik1-a</name>
</gene>
<dbReference type="EC" id="2.7.11.1"/>
<dbReference type="EMBL" id="BC068754">
    <property type="protein sequence ID" value="AAH68754.1"/>
    <property type="molecule type" value="mRNA"/>
</dbReference>
<dbReference type="RefSeq" id="NP_001084539.1">
    <property type="nucleotide sequence ID" value="NM_001091070.1"/>
</dbReference>
<dbReference type="RefSeq" id="XP_018103653.1">
    <property type="nucleotide sequence ID" value="XM_018248164.1"/>
</dbReference>
<dbReference type="RefSeq" id="XP_018103654.1">
    <property type="nucleotide sequence ID" value="XM_018248165.1"/>
</dbReference>
<dbReference type="RefSeq" id="XP_018103655.1">
    <property type="nucleotide sequence ID" value="XM_018248166.1"/>
</dbReference>
<dbReference type="SMR" id="Q6NU47"/>
<dbReference type="DNASU" id="414486"/>
<dbReference type="GeneID" id="414486"/>
<dbReference type="KEGG" id="xla:414486"/>
<dbReference type="AGR" id="Xenbase:XB-GENE-6252837"/>
<dbReference type="CTD" id="414486"/>
<dbReference type="Xenbase" id="XB-GENE-6252837">
    <property type="gene designation" value="pdik1l.S"/>
</dbReference>
<dbReference type="OMA" id="MVQKMAH"/>
<dbReference type="OrthoDB" id="4062651at2759"/>
<dbReference type="Proteomes" id="UP000186698">
    <property type="component" value="Chromosome 2S"/>
</dbReference>
<dbReference type="Bgee" id="414486">
    <property type="expression patterns" value="Expressed in egg cell and 19 other cell types or tissues"/>
</dbReference>
<dbReference type="GO" id="GO:0005737">
    <property type="term" value="C:cytoplasm"/>
    <property type="evidence" value="ECO:0000318"/>
    <property type="project" value="GO_Central"/>
</dbReference>
<dbReference type="GO" id="GO:0005634">
    <property type="term" value="C:nucleus"/>
    <property type="evidence" value="ECO:0000318"/>
    <property type="project" value="GO_Central"/>
</dbReference>
<dbReference type="GO" id="GO:0005524">
    <property type="term" value="F:ATP binding"/>
    <property type="evidence" value="ECO:0007669"/>
    <property type="project" value="UniProtKB-KW"/>
</dbReference>
<dbReference type="GO" id="GO:0004672">
    <property type="term" value="F:protein kinase activity"/>
    <property type="evidence" value="ECO:0000318"/>
    <property type="project" value="GO_Central"/>
</dbReference>
<dbReference type="GO" id="GO:0106310">
    <property type="term" value="F:protein serine kinase activity"/>
    <property type="evidence" value="ECO:0007669"/>
    <property type="project" value="RHEA"/>
</dbReference>
<dbReference type="GO" id="GO:0004674">
    <property type="term" value="F:protein serine/threonine kinase activity"/>
    <property type="evidence" value="ECO:0007669"/>
    <property type="project" value="UniProtKB-KW"/>
</dbReference>
<dbReference type="GO" id="GO:0010972">
    <property type="term" value="P:negative regulation of G2/M transition of mitotic cell cycle"/>
    <property type="evidence" value="ECO:0000318"/>
    <property type="project" value="GO_Central"/>
</dbReference>
<dbReference type="GO" id="GO:0110031">
    <property type="term" value="P:negative regulation of G2/MI transition of meiotic cell cycle"/>
    <property type="evidence" value="ECO:0000318"/>
    <property type="project" value="GO_Central"/>
</dbReference>
<dbReference type="CDD" id="cd13977">
    <property type="entry name" value="STKc_PDIK1L"/>
    <property type="match status" value="1"/>
</dbReference>
<dbReference type="FunFam" id="1.10.510.10:FF:000174">
    <property type="entry name" value="Serine/threonine-protein kinase PDIK1L"/>
    <property type="match status" value="1"/>
</dbReference>
<dbReference type="FunFam" id="3.30.200.20:FF:000165">
    <property type="entry name" value="Serine/threonine-protein kinase PDIK1L"/>
    <property type="match status" value="1"/>
</dbReference>
<dbReference type="Gene3D" id="3.30.200.20">
    <property type="entry name" value="Phosphorylase Kinase, domain 1"/>
    <property type="match status" value="1"/>
</dbReference>
<dbReference type="Gene3D" id="1.10.510.10">
    <property type="entry name" value="Transferase(Phosphotransferase) domain 1"/>
    <property type="match status" value="1"/>
</dbReference>
<dbReference type="InterPro" id="IPR050339">
    <property type="entry name" value="CC_SR_Kinase"/>
</dbReference>
<dbReference type="InterPro" id="IPR011009">
    <property type="entry name" value="Kinase-like_dom_sf"/>
</dbReference>
<dbReference type="InterPro" id="IPR000719">
    <property type="entry name" value="Prot_kinase_dom"/>
</dbReference>
<dbReference type="InterPro" id="IPR017441">
    <property type="entry name" value="Protein_kinase_ATP_BS"/>
</dbReference>
<dbReference type="InterPro" id="IPR008271">
    <property type="entry name" value="Ser/Thr_kinase_AS"/>
</dbReference>
<dbReference type="PANTHER" id="PTHR11042">
    <property type="entry name" value="EUKARYOTIC TRANSLATION INITIATION FACTOR 2-ALPHA KINASE EIF2-ALPHA KINASE -RELATED"/>
    <property type="match status" value="1"/>
</dbReference>
<dbReference type="PANTHER" id="PTHR11042:SF58">
    <property type="entry name" value="SERINE_THREONINE-PROTEIN KINASE PDIK1L"/>
    <property type="match status" value="1"/>
</dbReference>
<dbReference type="Pfam" id="PF00069">
    <property type="entry name" value="Pkinase"/>
    <property type="match status" value="1"/>
</dbReference>
<dbReference type="PIRSF" id="PIRSF000654">
    <property type="entry name" value="Integrin-linked_kinase"/>
    <property type="match status" value="1"/>
</dbReference>
<dbReference type="SMART" id="SM00220">
    <property type="entry name" value="S_TKc"/>
    <property type="match status" value="1"/>
</dbReference>
<dbReference type="SUPFAM" id="SSF56112">
    <property type="entry name" value="Protein kinase-like (PK-like)"/>
    <property type="match status" value="1"/>
</dbReference>
<dbReference type="PROSITE" id="PS00107">
    <property type="entry name" value="PROTEIN_KINASE_ATP"/>
    <property type="match status" value="1"/>
</dbReference>
<dbReference type="PROSITE" id="PS50011">
    <property type="entry name" value="PROTEIN_KINASE_DOM"/>
    <property type="match status" value="1"/>
</dbReference>
<dbReference type="PROSITE" id="PS00108">
    <property type="entry name" value="PROTEIN_KINASE_ST"/>
    <property type="match status" value="1"/>
</dbReference>
<comment type="catalytic activity">
    <reaction>
        <text>L-seryl-[protein] + ATP = O-phospho-L-seryl-[protein] + ADP + H(+)</text>
        <dbReference type="Rhea" id="RHEA:17989"/>
        <dbReference type="Rhea" id="RHEA-COMP:9863"/>
        <dbReference type="Rhea" id="RHEA-COMP:11604"/>
        <dbReference type="ChEBI" id="CHEBI:15378"/>
        <dbReference type="ChEBI" id="CHEBI:29999"/>
        <dbReference type="ChEBI" id="CHEBI:30616"/>
        <dbReference type="ChEBI" id="CHEBI:83421"/>
        <dbReference type="ChEBI" id="CHEBI:456216"/>
        <dbReference type="EC" id="2.7.11.1"/>
    </reaction>
</comment>
<comment type="catalytic activity">
    <reaction>
        <text>L-threonyl-[protein] + ATP = O-phospho-L-threonyl-[protein] + ADP + H(+)</text>
        <dbReference type="Rhea" id="RHEA:46608"/>
        <dbReference type="Rhea" id="RHEA-COMP:11060"/>
        <dbReference type="Rhea" id="RHEA-COMP:11605"/>
        <dbReference type="ChEBI" id="CHEBI:15378"/>
        <dbReference type="ChEBI" id="CHEBI:30013"/>
        <dbReference type="ChEBI" id="CHEBI:30616"/>
        <dbReference type="ChEBI" id="CHEBI:61977"/>
        <dbReference type="ChEBI" id="CHEBI:456216"/>
        <dbReference type="EC" id="2.7.11.1"/>
    </reaction>
</comment>
<comment type="subcellular location">
    <subcellularLocation>
        <location evidence="1">Nucleus</location>
    </subcellularLocation>
</comment>
<comment type="similarity">
    <text evidence="2">Belongs to the protein kinase superfamily. Ser/Thr protein kinase family.</text>
</comment>
<feature type="chain" id="PRO_0000086498" description="Serine/threonine-protein kinase pdik1l-A">
    <location>
        <begin position="1"/>
        <end position="339"/>
    </location>
</feature>
<feature type="domain" description="Protein kinase" evidence="2">
    <location>
        <begin position="8"/>
        <end position="332"/>
    </location>
</feature>
<feature type="active site" description="Proton acceptor" evidence="2 3">
    <location>
        <position position="164"/>
    </location>
</feature>
<feature type="binding site" evidence="2">
    <location>
        <begin position="14"/>
        <end position="22"/>
    </location>
    <ligand>
        <name>ATP</name>
        <dbReference type="ChEBI" id="CHEBI:30616"/>
    </ligand>
</feature>
<feature type="binding site" evidence="2">
    <location>
        <position position="37"/>
    </location>
    <ligand>
        <name>ATP</name>
        <dbReference type="ChEBI" id="CHEBI:30616"/>
    </ligand>
</feature>
<organism>
    <name type="scientific">Xenopus laevis</name>
    <name type="common">African clawed frog</name>
    <dbReference type="NCBI Taxonomy" id="8355"/>
    <lineage>
        <taxon>Eukaryota</taxon>
        <taxon>Metazoa</taxon>
        <taxon>Chordata</taxon>
        <taxon>Craniata</taxon>
        <taxon>Vertebrata</taxon>
        <taxon>Euteleostomi</taxon>
        <taxon>Amphibia</taxon>
        <taxon>Batrachia</taxon>
        <taxon>Anura</taxon>
        <taxon>Pipoidea</taxon>
        <taxon>Pipidae</taxon>
        <taxon>Xenopodinae</taxon>
        <taxon>Xenopus</taxon>
        <taxon>Xenopus</taxon>
    </lineage>
</organism>
<proteinExistence type="evidence at transcript level"/>
<reference key="1">
    <citation type="submission" date="2004-04" db="EMBL/GenBank/DDBJ databases">
        <authorList>
            <consortium name="NIH - Xenopus Gene Collection (XGC) project"/>
        </authorList>
    </citation>
    <scope>NUCLEOTIDE SEQUENCE [LARGE SCALE MRNA]</scope>
    <source>
        <tissue>Embryo</tissue>
    </source>
</reference>
<accession>Q6NU47</accession>
<keyword id="KW-0067">ATP-binding</keyword>
<keyword id="KW-0418">Kinase</keyword>
<keyword id="KW-0547">Nucleotide-binding</keyword>
<keyword id="KW-0539">Nucleus</keyword>
<keyword id="KW-1185">Reference proteome</keyword>
<keyword id="KW-0723">Serine/threonine-protein kinase</keyword>
<keyword id="KW-0808">Transferase</keyword>